<evidence type="ECO:0000255" key="1">
    <source>
        <dbReference type="HAMAP-Rule" id="MF_01186"/>
    </source>
</evidence>
<evidence type="ECO:0000256" key="2">
    <source>
        <dbReference type="SAM" id="MobiDB-lite"/>
    </source>
</evidence>
<organism>
    <name type="scientific">Escherichia coli (strain UTI89 / UPEC)</name>
    <dbReference type="NCBI Taxonomy" id="364106"/>
    <lineage>
        <taxon>Bacteria</taxon>
        <taxon>Pseudomonadati</taxon>
        <taxon>Pseudomonadota</taxon>
        <taxon>Gammaproteobacteria</taxon>
        <taxon>Enterobacterales</taxon>
        <taxon>Enterobacteriaceae</taxon>
        <taxon>Escherichia</taxon>
    </lineage>
</organism>
<comment type="function">
    <text evidence="1">Together with LptD, is involved in the assembly of lipopolysaccharide (LPS) at the surface of the outer membrane. Required for the proper assembly of LptD. Binds LPS and may serve as the LPS recognition site at the outer membrane.</text>
</comment>
<comment type="subunit">
    <text evidence="1">Component of the lipopolysaccharide transport and assembly complex. Interacts with LptD.</text>
</comment>
<comment type="subcellular location">
    <subcellularLocation>
        <location evidence="1">Cell outer membrane</location>
        <topology evidence="1">Lipid-anchor</topology>
    </subcellularLocation>
</comment>
<comment type="similarity">
    <text evidence="1">Belongs to the LptE lipoprotein family.</text>
</comment>
<protein>
    <recommendedName>
        <fullName evidence="1">LPS-assembly lipoprotein LptE</fullName>
    </recommendedName>
</protein>
<keyword id="KW-0998">Cell outer membrane</keyword>
<keyword id="KW-0449">Lipoprotein</keyword>
<keyword id="KW-0472">Membrane</keyword>
<keyword id="KW-0564">Palmitate</keyword>
<keyword id="KW-0732">Signal</keyword>
<gene>
    <name evidence="1" type="primary">lptE</name>
    <name type="synonym">rlpB</name>
    <name type="ordered locus">UTI89_C0644</name>
</gene>
<accession>Q1RES0</accession>
<reference key="1">
    <citation type="journal article" date="2006" name="Proc. Natl. Acad. Sci. U.S.A.">
        <title>Identification of genes subject to positive selection in uropathogenic strains of Escherichia coli: a comparative genomics approach.</title>
        <authorList>
            <person name="Chen S.L."/>
            <person name="Hung C.-S."/>
            <person name="Xu J."/>
            <person name="Reigstad C.S."/>
            <person name="Magrini V."/>
            <person name="Sabo A."/>
            <person name="Blasiar D."/>
            <person name="Bieri T."/>
            <person name="Meyer R.R."/>
            <person name="Ozersky P."/>
            <person name="Armstrong J.R."/>
            <person name="Fulton R.S."/>
            <person name="Latreille J.P."/>
            <person name="Spieth J."/>
            <person name="Hooton T.M."/>
            <person name="Mardis E.R."/>
            <person name="Hultgren S.J."/>
            <person name="Gordon J.I."/>
        </authorList>
    </citation>
    <scope>NUCLEOTIDE SEQUENCE [LARGE SCALE GENOMIC DNA]</scope>
    <source>
        <strain>UTI89 / UPEC</strain>
    </source>
</reference>
<name>LPTE_ECOUT</name>
<sequence>MRYLATLLLSLAVLITAGCGWHLRDTTQVPSTMKVMILDSGDPNGPLSRAVRNQLRLNGVELLDKETTRKDVPSLRLGKVSIAKDTASVFRNGQTAEYQMIMTVNATVLIPGRDIYPISAKVFRSFFDNPQMALAKDNEQDMIVKEMYDRAAEQLIRKLPSIRAADIRSDEEQTSTTTDTPATPARVSTTLGN</sequence>
<dbReference type="EMBL" id="CP000243">
    <property type="protein sequence ID" value="ABE06144.1"/>
    <property type="molecule type" value="Genomic_DNA"/>
</dbReference>
<dbReference type="RefSeq" id="WP_001269673.1">
    <property type="nucleotide sequence ID" value="NZ_CP064825.1"/>
</dbReference>
<dbReference type="SMR" id="Q1RES0"/>
<dbReference type="GeneID" id="93776841"/>
<dbReference type="KEGG" id="eci:UTI89_C0644"/>
<dbReference type="HOGENOM" id="CLU_103309_1_1_6"/>
<dbReference type="Proteomes" id="UP000001952">
    <property type="component" value="Chromosome"/>
</dbReference>
<dbReference type="GO" id="GO:0009279">
    <property type="term" value="C:cell outer membrane"/>
    <property type="evidence" value="ECO:0007669"/>
    <property type="project" value="UniProtKB-SubCell"/>
</dbReference>
<dbReference type="GO" id="GO:1990351">
    <property type="term" value="C:transporter complex"/>
    <property type="evidence" value="ECO:0007669"/>
    <property type="project" value="TreeGrafter"/>
</dbReference>
<dbReference type="GO" id="GO:0001530">
    <property type="term" value="F:lipopolysaccharide binding"/>
    <property type="evidence" value="ECO:0007669"/>
    <property type="project" value="TreeGrafter"/>
</dbReference>
<dbReference type="GO" id="GO:0043165">
    <property type="term" value="P:Gram-negative-bacterium-type cell outer membrane assembly"/>
    <property type="evidence" value="ECO:0007669"/>
    <property type="project" value="UniProtKB-UniRule"/>
</dbReference>
<dbReference type="GO" id="GO:0015920">
    <property type="term" value="P:lipopolysaccharide transport"/>
    <property type="evidence" value="ECO:0007669"/>
    <property type="project" value="TreeGrafter"/>
</dbReference>
<dbReference type="FunFam" id="3.30.160.150:FF:000001">
    <property type="entry name" value="LPS-assembly lipoprotein LptE"/>
    <property type="match status" value="1"/>
</dbReference>
<dbReference type="Gene3D" id="3.30.160.150">
    <property type="entry name" value="Lipoprotein like domain"/>
    <property type="match status" value="1"/>
</dbReference>
<dbReference type="HAMAP" id="MF_01186">
    <property type="entry name" value="LPS_assembly_LptE"/>
    <property type="match status" value="1"/>
</dbReference>
<dbReference type="InterPro" id="IPR007485">
    <property type="entry name" value="LPS_assembly_LptE"/>
</dbReference>
<dbReference type="NCBIfam" id="NF008062">
    <property type="entry name" value="PRK10796.1"/>
    <property type="match status" value="1"/>
</dbReference>
<dbReference type="PANTHER" id="PTHR38098">
    <property type="entry name" value="LPS-ASSEMBLY LIPOPROTEIN LPTE"/>
    <property type="match status" value="1"/>
</dbReference>
<dbReference type="PANTHER" id="PTHR38098:SF1">
    <property type="entry name" value="LPS-ASSEMBLY LIPOPROTEIN LPTE"/>
    <property type="match status" value="1"/>
</dbReference>
<dbReference type="Pfam" id="PF04390">
    <property type="entry name" value="LptE"/>
    <property type="match status" value="1"/>
</dbReference>
<dbReference type="PROSITE" id="PS51257">
    <property type="entry name" value="PROKAR_LIPOPROTEIN"/>
    <property type="match status" value="1"/>
</dbReference>
<proteinExistence type="inferred from homology"/>
<feature type="signal peptide" evidence="1">
    <location>
        <begin position="1"/>
        <end position="18"/>
    </location>
</feature>
<feature type="chain" id="PRO_0000281176" description="LPS-assembly lipoprotein LptE">
    <location>
        <begin position="19"/>
        <end position="193"/>
    </location>
</feature>
<feature type="region of interest" description="Disordered" evidence="2">
    <location>
        <begin position="166"/>
        <end position="193"/>
    </location>
</feature>
<feature type="compositionally biased region" description="Low complexity" evidence="2">
    <location>
        <begin position="174"/>
        <end position="186"/>
    </location>
</feature>
<feature type="lipid moiety-binding region" description="N-palmitoyl cysteine" evidence="1">
    <location>
        <position position="19"/>
    </location>
</feature>
<feature type="lipid moiety-binding region" description="S-diacylglycerol cysteine" evidence="1">
    <location>
        <position position="19"/>
    </location>
</feature>